<dbReference type="EMBL" id="AF297625">
    <property type="protein sequence ID" value="AAK97204.1"/>
    <property type="molecule type" value="Genomic_DNA"/>
</dbReference>
<dbReference type="PIR" id="JQ2045">
    <property type="entry name" value="JQ2045"/>
</dbReference>
<dbReference type="PIR" id="JQ2046">
    <property type="entry name" value="JQ2046"/>
</dbReference>
<dbReference type="PIR" id="JQ2047">
    <property type="entry name" value="JQ2047"/>
</dbReference>
<dbReference type="PIR" id="JQ2048">
    <property type="entry name" value="JQ2048"/>
</dbReference>
<dbReference type="PIR" id="JQ2050">
    <property type="entry name" value="JQ2050"/>
</dbReference>
<dbReference type="PIR" id="JQ2051">
    <property type="entry name" value="JQ2051"/>
</dbReference>
<dbReference type="PIR" id="JQ2053">
    <property type="entry name" value="JQ2053"/>
</dbReference>
<dbReference type="PIR" id="JQ2054">
    <property type="entry name" value="JQ2054"/>
</dbReference>
<dbReference type="PDB" id="1KC5">
    <property type="method" value="X-ray"/>
    <property type="resolution" value="2.50 A"/>
    <property type="chains" value="P=17-31"/>
</dbReference>
<dbReference type="PDB" id="1KCR">
    <property type="method" value="X-ray"/>
    <property type="resolution" value="2.90 A"/>
    <property type="chains" value="P=17-31"/>
</dbReference>
<dbReference type="PDB" id="1KCS">
    <property type="method" value="X-ray"/>
    <property type="resolution" value="2.50 A"/>
    <property type="chains" value="P=17-31"/>
</dbReference>
<dbReference type="PDBsum" id="1KC5"/>
<dbReference type="PDBsum" id="1KCR"/>
<dbReference type="PDBsum" id="1KCS"/>
<dbReference type="SMR" id="Q91C35"/>
<dbReference type="GlyCosmos" id="Q91C35">
    <property type="glycosylation" value="1 site, No reported glycans"/>
</dbReference>
<dbReference type="ABCD" id="Q91C35">
    <property type="antibodies" value="3 sequenced antibodies"/>
</dbReference>
<dbReference type="EvolutionaryTrace" id="Q91C35"/>
<dbReference type="Proteomes" id="UP000007909">
    <property type="component" value="Genome"/>
</dbReference>
<dbReference type="GO" id="GO:0016020">
    <property type="term" value="C:membrane"/>
    <property type="evidence" value="ECO:0007669"/>
    <property type="project" value="UniProtKB-UniRule"/>
</dbReference>
<dbReference type="GO" id="GO:0019031">
    <property type="term" value="C:viral envelope"/>
    <property type="evidence" value="ECO:0007669"/>
    <property type="project" value="UniProtKB-KW"/>
</dbReference>
<dbReference type="GO" id="GO:0055036">
    <property type="term" value="C:virion membrane"/>
    <property type="evidence" value="ECO:0007669"/>
    <property type="project" value="UniProtKB-SubCell"/>
</dbReference>
<dbReference type="GO" id="GO:0075513">
    <property type="term" value="P:caveolin-mediated endocytosis of virus by host cell"/>
    <property type="evidence" value="ECO:0007669"/>
    <property type="project" value="UniProtKB-KW"/>
</dbReference>
<dbReference type="GO" id="GO:0039654">
    <property type="term" value="P:fusion of virus membrane with host endosome membrane"/>
    <property type="evidence" value="ECO:0007669"/>
    <property type="project" value="UniProtKB-KW"/>
</dbReference>
<dbReference type="GO" id="GO:0019062">
    <property type="term" value="P:virion attachment to host cell"/>
    <property type="evidence" value="ECO:0007669"/>
    <property type="project" value="UniProtKB-UniRule"/>
</dbReference>
<dbReference type="HAMAP" id="MF_04075">
    <property type="entry name" value="HBV_HBSAG"/>
    <property type="match status" value="1"/>
</dbReference>
<dbReference type="InterPro" id="IPR000349">
    <property type="entry name" value="HBV_HBSAG"/>
</dbReference>
<dbReference type="Pfam" id="PF00695">
    <property type="entry name" value="vMSA"/>
    <property type="match status" value="1"/>
</dbReference>
<keyword id="KW-0002">3D-structure</keyword>
<keyword id="KW-0007">Acetylation</keyword>
<keyword id="KW-0024">Alternative initiation</keyword>
<keyword id="KW-0025">Alternative splicing</keyword>
<keyword id="KW-1166">Caveolin-mediated endocytosis of virus by host</keyword>
<keyword id="KW-1170">Fusion of virus membrane with host endosomal membrane</keyword>
<keyword id="KW-1168">Fusion of virus membrane with host membrane</keyword>
<keyword id="KW-0325">Glycoprotein</keyword>
<keyword id="KW-0945">Host-virus interaction</keyword>
<keyword id="KW-0449">Lipoprotein</keyword>
<keyword id="KW-0472">Membrane</keyword>
<keyword id="KW-0519">Myristate</keyword>
<keyword id="KW-0812">Transmembrane</keyword>
<keyword id="KW-1133">Transmembrane helix</keyword>
<keyword id="KW-1161">Viral attachment to host cell</keyword>
<keyword id="KW-0261">Viral envelope protein</keyword>
<keyword id="KW-1162">Viral penetration into host cytoplasm</keyword>
<keyword id="KW-0946">Virion</keyword>
<keyword id="KW-1164">Virus endocytosis by host</keyword>
<keyword id="KW-1160">Virus entry into host cell</keyword>
<protein>
    <recommendedName>
        <fullName evidence="3">Large envelope protein</fullName>
    </recommendedName>
    <alternativeName>
        <fullName evidence="3">L glycoprotein</fullName>
    </alternativeName>
    <alternativeName>
        <fullName evidence="3">L-HBsAg</fullName>
        <shortName evidence="3">LHB</shortName>
    </alternativeName>
    <alternativeName>
        <fullName evidence="3">Large S protein</fullName>
    </alternativeName>
    <alternativeName>
        <fullName evidence="3">Large surface protein</fullName>
    </alternativeName>
    <alternativeName>
        <fullName evidence="3">Major surface antigen</fullName>
    </alternativeName>
</protein>
<feature type="initiator methionine" description="Removed; by host" evidence="3">
    <location>
        <position position="1"/>
    </location>
</feature>
<feature type="chain" id="PRO_0000319071" description="Large envelope protein" evidence="3">
    <location>
        <begin position="2"/>
        <end position="389"/>
    </location>
</feature>
<feature type="topological domain" description="Intravirion; in internal conformation" evidence="3">
    <location>
        <begin position="2"/>
        <end position="242"/>
    </location>
</feature>
<feature type="topological domain" description="Virion surface; in external conformation" evidence="3">
    <location>
        <begin position="2"/>
        <end position="170"/>
    </location>
</feature>
<feature type="transmembrane region" description="Helical; Name=TM1; Note=In external conformation" evidence="3">
    <location>
        <begin position="171"/>
        <end position="191"/>
    </location>
</feature>
<feature type="topological domain" description="Intravirion; in external conformation" evidence="3">
    <location>
        <begin position="192"/>
        <end position="242"/>
    </location>
</feature>
<feature type="transmembrane region" description="Helical; Name=TM2" evidence="3">
    <location>
        <begin position="243"/>
        <end position="263"/>
    </location>
</feature>
<feature type="topological domain" description="Virion surface" evidence="3">
    <location>
        <begin position="264"/>
        <end position="337"/>
    </location>
</feature>
<feature type="transmembrane region" description="Helical" evidence="3">
    <location>
        <begin position="338"/>
        <end position="358"/>
    </location>
</feature>
<feature type="topological domain" description="Intravirion" evidence="3">
    <location>
        <begin position="359"/>
        <end position="364"/>
    </location>
</feature>
<feature type="transmembrane region" description="Helical; Name=TM3" evidence="3">
    <location>
        <begin position="365"/>
        <end position="387"/>
    </location>
</feature>
<feature type="topological domain" description="Virion surface" evidence="3">
    <location>
        <begin position="388"/>
        <end position="389"/>
    </location>
</feature>
<feature type="region of interest" description="Pre-S" evidence="3">
    <location>
        <begin position="2"/>
        <end position="163"/>
    </location>
</feature>
<feature type="region of interest" description="Pre-S1" evidence="3">
    <location>
        <begin position="2"/>
        <end position="108"/>
    </location>
</feature>
<feature type="region of interest" description="Disordered" evidence="4">
    <location>
        <begin position="79"/>
        <end position="103"/>
    </location>
</feature>
<feature type="region of interest" description="Pre-S2" evidence="3">
    <location>
        <begin position="109"/>
        <end position="163"/>
    </location>
</feature>
<feature type="compositionally biased region" description="Polar residues" evidence="4">
    <location>
        <begin position="84"/>
        <end position="95"/>
    </location>
</feature>
<feature type="lipid moiety-binding region" description="N-myristoyl glycine; by host" evidence="3">
    <location>
        <position position="2"/>
    </location>
</feature>
<feature type="glycosylation site" description="N-linked (GlcNAc...) asparagine; by host" evidence="3">
    <location>
        <position position="309"/>
    </location>
</feature>
<feature type="splice variant" id="VSP_031360" description="In isoform S." evidence="5">
    <location>
        <begin position="1"/>
        <end position="163"/>
    </location>
</feature>
<feature type="splice variant" id="VSP_031361" description="In isoform M." evidence="5">
    <location>
        <begin position="1"/>
        <end position="108"/>
    </location>
</feature>
<feature type="helix" evidence="6">
    <location>
        <begin position="21"/>
        <end position="23"/>
    </location>
</feature>
<feature type="modified residue" description="N-acetylmethionine" evidence="1">
    <location sequence="Q91C35-2">
        <position position="1"/>
    </location>
</feature>
<accession>Q91C35</accession>
<organism>
    <name type="scientific">Hepatitis B virus genotype A1 subtype adw2 (isolate South Africa/84/2001)</name>
    <name type="common">HBV-A</name>
    <dbReference type="NCBI Taxonomy" id="489454"/>
    <lineage>
        <taxon>Viruses</taxon>
        <taxon>Riboviria</taxon>
        <taxon>Pararnavirae</taxon>
        <taxon>Artverviricota</taxon>
        <taxon>Revtraviricetes</taxon>
        <taxon>Blubervirales</taxon>
        <taxon>Hepadnaviridae</taxon>
        <taxon>Orthohepadnavirus</taxon>
        <taxon>Hepatitis B virus</taxon>
    </lineage>
</organism>
<sequence length="389" mass="42640">MGTNLSVPNPLGFFPDHQLDPAFGANSTNPDWDFNPIKDHWPQANQVGVGAFGPGHSPPHGGVLGWSPQAQGILTTVPTVPPTASTNRQSGRQPTPISPPLRDSHPQAMQWNSTALHQALQDPRVRGLYFPAGGSSSGTLNPVPNTASHISSISSRTGDPALNMENITSGFLGPLLVLQAGFFLLTRILTIPQSLDSWWTSLNFLGGSPVCLGQNSQYPTSNHSPTSCPPICPGYRWMCLRRFIIFLFILLLCLIFLLVLLDYQGMLPVCPLIPGSTTTSTGPCKTCTTPAQGNSMFPSCCCTKPTDGNCTCIPIPSSWAFAKYLWEWASVRFSWLSLLVPFVQWFVGLSPTVWLSVIWMMWYWGPSLYNIVSPFIPLLPIFFCLWVYI</sequence>
<name>HBSAG_HBVA6</name>
<comment type="function">
    <text evidence="3">The large envelope protein exists in two topological conformations, one which is termed 'external' or Le-HBsAg and the other 'internal' or Li-HBsAg. In its external conformation the protein attaches the virus to cell receptors and thereby initiating infection. This interaction determines the species specificity and liver tropism. This attachment induces virion internalization predominantly through caveolin-mediated endocytosis. The large envelope protein also assures fusion between virion membrane and endosomal membrane. In its internal conformation the protein plays a role in virion morphogenesis and mediates the contact with the nucleocapsid like a matrix protein.</text>
</comment>
<comment type="function">
    <text evidence="3">The middle envelope protein plays an important role in the budding of the virion. It is involved in the induction of budding in a nucleocapsid independent way. In this process the majority of envelope proteins bud to form subviral lipoprotein particles of 22 nm of diameter that do not contain a nucleocapsid.</text>
</comment>
<comment type="subunit">
    <molecule>Isoform L</molecule>
    <text evidence="2">In its internal form (Li-HBsAg), interacts with the capsid protein and with the isoform S. Interacts with host chaperone CANX.</text>
</comment>
<comment type="subunit">
    <molecule>Isoform M</molecule>
    <text evidence="2">Associates with host chaperone CANX through its pre-S2 N glycan; this association may be essential for isoform M proper secretion.</text>
</comment>
<comment type="subunit">
    <molecule>Isoform S</molecule>
    <text evidence="2">Interacts with isoform L. Interacts with the antigens of satellite virus HDV (HDVAgs); this interaction is required for encapsidation of HDV genomic RNA.</text>
</comment>
<comment type="subcellular location">
    <subcellularLocation>
        <location evidence="3">Virion membrane</location>
    </subcellularLocation>
</comment>
<comment type="alternative products">
    <event type="alternative splicing"/>
    <event type="alternative initiation"/>
    <isoform>
        <id>Q91C35-1</id>
        <name>L</name>
        <name>Large envelope protein</name>
        <name>LHB</name>
        <name>L-HBsAg</name>
        <sequence type="displayed"/>
    </isoform>
    <isoform>
        <id>Q91C35-2</id>
        <name>M</name>
        <name>Middle envelope protein</name>
        <name>MHB</name>
        <name>M-HBsAg</name>
        <sequence type="described" ref="VSP_031361"/>
    </isoform>
    <isoform>
        <id>Q91C35-3</id>
        <name>S</name>
        <name>Small envelope protein</name>
        <name>SHB</name>
        <name>S-HBsAg</name>
        <sequence type="described" ref="VSP_031360"/>
    </isoform>
</comment>
<comment type="domain">
    <text evidence="3">The large envelope protein is synthesized with the pre-S region at the cytosolic side of the endoplasmic reticulum and, hence will be within the virion after budding. Therefore the pre-S region is not N-glycosylated. Later a post-translational translocation of N-terminal pre-S and TM1 domains occur in about 50% of proteins at the virion surface. These molecules change their topology by an unknown mechanism, resulting in exposure of pre-S region at virion surface. For isoform M in contrast, the pre-S2 region is translocated cotranslationally to the endoplasmic reticulum lumen and is N-glycosylated.</text>
</comment>
<comment type="PTM">
    <text evidence="1 3">Isoform M is N-terminally acetylated by host at a ratio of 90%, and N-glycosylated by host at the pre-S2 region.</text>
</comment>
<comment type="PTM">
    <text evidence="3">Myristoylated.</text>
</comment>
<comment type="biotechnology">
    <text>Systematic vaccination of individuals at risk of exposure to the virus has been the main method of controlling the morbidity and mortality associated with hepatitis B. The first hepatitis B vaccine was manufactured by the purification and inactivation of HBsAg obtained from the plasma of chronic hepatitis B virus carriers. The vaccine is now produced by recombinant DNA techniques and expression of the S isoform in yeast cells. The pre-S region do not seem to induce strong enough antigenic response.</text>
</comment>
<comment type="similarity">
    <text evidence="3">Belongs to the orthohepadnavirus major surface antigen family.</text>
</comment>
<reference key="1">
    <citation type="journal article" date="2001" name="J. Med. Virol.">
        <title>Molecular analysis of hepatitis B virus genomes isolated from black African patients with fulminant hepatitis B.</title>
        <authorList>
            <person name="Owiredu W.K."/>
            <person name="Kramvis A."/>
            <person name="Kew M.C."/>
        </authorList>
    </citation>
    <scope>NUCLEOTIDE SEQUENCE [GENOMIC DNA]</scope>
</reference>
<reference key="2">
    <citation type="journal article" date="1996" name="Intervirology">
        <title>Functions of the large hepatitis B virus surface protein in viral particle morphogenesis.</title>
        <authorList>
            <person name="Bruss V."/>
            <person name="Gerhardt E."/>
            <person name="Vieluf K."/>
            <person name="Wunderlich G."/>
        </authorList>
    </citation>
    <scope>REVIEW</scope>
</reference>
<reference key="3">
    <citation type="journal article" date="1998" name="Adv. Exp. Med. Biol.">
        <title>Role of glycan processing in hepatitis B virus envelope protein trafficking.</title>
        <authorList>
            <person name="Block T.M."/>
            <person name="Lu X."/>
            <person name="Mehta A."/>
            <person name="Park J."/>
            <person name="Blumberg B.S."/>
            <person name="Dwek R."/>
        </authorList>
    </citation>
    <scope>REVIEW</scope>
</reference>
<reference key="4">
    <citation type="journal article" date="2004" name="Virus Res.">
        <title>Envelopment of the hepatitis B virus nucleocapsid.</title>
        <authorList>
            <person name="Bruss V."/>
        </authorList>
    </citation>
    <scope>REVIEW</scope>
</reference>
<reference key="5">
    <citation type="journal article" date="2006" name="Cancer Sci.">
        <title>Hepatitis B virus pre-S mutants, endoplasmic reticulum stress and hepatocarcinogenesis.</title>
        <authorList>
            <person name="Wang H.C."/>
            <person name="Huang W."/>
            <person name="Lai M.D."/>
            <person name="Su I.J."/>
        </authorList>
    </citation>
    <scope>REVIEW</scope>
</reference>
<evidence type="ECO:0000250" key="1">
    <source>
        <dbReference type="UniProtKB" id="P03138"/>
    </source>
</evidence>
<evidence type="ECO:0000250" key="2">
    <source>
        <dbReference type="UniProtKB" id="P03141"/>
    </source>
</evidence>
<evidence type="ECO:0000255" key="3">
    <source>
        <dbReference type="HAMAP-Rule" id="MF_04075"/>
    </source>
</evidence>
<evidence type="ECO:0000256" key="4">
    <source>
        <dbReference type="SAM" id="MobiDB-lite"/>
    </source>
</evidence>
<evidence type="ECO:0000305" key="5"/>
<evidence type="ECO:0007829" key="6">
    <source>
        <dbReference type="PDB" id="1KCS"/>
    </source>
</evidence>
<organismHost>
    <name type="scientific">Homo sapiens</name>
    <name type="common">Human</name>
    <dbReference type="NCBI Taxonomy" id="9606"/>
</organismHost>
<organismHost>
    <name type="scientific">Pan troglodytes</name>
    <name type="common">Chimpanzee</name>
    <dbReference type="NCBI Taxonomy" id="9598"/>
</organismHost>
<gene>
    <name evidence="3" type="primary">S</name>
</gene>
<proteinExistence type="evidence at protein level"/>